<keyword id="KW-0648">Protein biosynthesis</keyword>
<keyword id="KW-0808">Transferase</keyword>
<feature type="chain" id="PRO_1000020017" description="Methionyl-tRNA formyltransferase">
    <location>
        <begin position="1"/>
        <end position="317"/>
    </location>
</feature>
<feature type="region of interest" description="Disordered" evidence="2">
    <location>
        <begin position="292"/>
        <end position="317"/>
    </location>
</feature>
<feature type="binding site" evidence="1">
    <location>
        <begin position="110"/>
        <end position="113"/>
    </location>
    <ligand>
        <name>(6S)-5,6,7,8-tetrahydrofolate</name>
        <dbReference type="ChEBI" id="CHEBI:57453"/>
    </ligand>
</feature>
<proteinExistence type="inferred from homology"/>
<accession>A7Z4J3</accession>
<protein>
    <recommendedName>
        <fullName evidence="1">Methionyl-tRNA formyltransferase</fullName>
        <ecNumber evidence="1">2.1.2.9</ecNumber>
    </recommendedName>
</protein>
<comment type="function">
    <text evidence="1">Attaches a formyl group to the free amino group of methionyl-tRNA(fMet). The formyl group appears to play a dual role in the initiator identity of N-formylmethionyl-tRNA by promoting its recognition by IF2 and preventing the misappropriation of this tRNA by the elongation apparatus.</text>
</comment>
<comment type="catalytic activity">
    <reaction evidence="1">
        <text>L-methionyl-tRNA(fMet) + (6R)-10-formyltetrahydrofolate = N-formyl-L-methionyl-tRNA(fMet) + (6S)-5,6,7,8-tetrahydrofolate + H(+)</text>
        <dbReference type="Rhea" id="RHEA:24380"/>
        <dbReference type="Rhea" id="RHEA-COMP:9952"/>
        <dbReference type="Rhea" id="RHEA-COMP:9953"/>
        <dbReference type="ChEBI" id="CHEBI:15378"/>
        <dbReference type="ChEBI" id="CHEBI:57453"/>
        <dbReference type="ChEBI" id="CHEBI:78530"/>
        <dbReference type="ChEBI" id="CHEBI:78844"/>
        <dbReference type="ChEBI" id="CHEBI:195366"/>
        <dbReference type="EC" id="2.1.2.9"/>
    </reaction>
</comment>
<comment type="similarity">
    <text evidence="1">Belongs to the Fmt family.</text>
</comment>
<dbReference type="EC" id="2.1.2.9" evidence="1"/>
<dbReference type="EMBL" id="CP000560">
    <property type="protein sequence ID" value="ABS73919.1"/>
    <property type="molecule type" value="Genomic_DNA"/>
</dbReference>
<dbReference type="RefSeq" id="WP_012117531.1">
    <property type="nucleotide sequence ID" value="NC_009725.2"/>
</dbReference>
<dbReference type="SMR" id="A7Z4J3"/>
<dbReference type="GeneID" id="93080689"/>
<dbReference type="KEGG" id="bay:RBAM_015560"/>
<dbReference type="HOGENOM" id="CLU_033347_1_1_9"/>
<dbReference type="Proteomes" id="UP000001120">
    <property type="component" value="Chromosome"/>
</dbReference>
<dbReference type="GO" id="GO:0005829">
    <property type="term" value="C:cytosol"/>
    <property type="evidence" value="ECO:0007669"/>
    <property type="project" value="TreeGrafter"/>
</dbReference>
<dbReference type="GO" id="GO:0004479">
    <property type="term" value="F:methionyl-tRNA formyltransferase activity"/>
    <property type="evidence" value="ECO:0007669"/>
    <property type="project" value="UniProtKB-UniRule"/>
</dbReference>
<dbReference type="CDD" id="cd08646">
    <property type="entry name" value="FMT_core_Met-tRNA-FMT_N"/>
    <property type="match status" value="1"/>
</dbReference>
<dbReference type="CDD" id="cd08704">
    <property type="entry name" value="Met_tRNA_FMT_C"/>
    <property type="match status" value="1"/>
</dbReference>
<dbReference type="FunFam" id="3.40.50.12230:FF:000001">
    <property type="entry name" value="Methionyl-tRNA formyltransferase"/>
    <property type="match status" value="1"/>
</dbReference>
<dbReference type="FunFam" id="3.40.50.170:FF:000004">
    <property type="entry name" value="Methionyl-tRNA formyltransferase"/>
    <property type="match status" value="1"/>
</dbReference>
<dbReference type="Gene3D" id="3.10.25.10">
    <property type="entry name" value="Formyl transferase, C-terminal domain"/>
    <property type="match status" value="1"/>
</dbReference>
<dbReference type="Gene3D" id="3.40.50.170">
    <property type="entry name" value="Formyl transferase, N-terminal domain"/>
    <property type="match status" value="1"/>
</dbReference>
<dbReference type="HAMAP" id="MF_00182">
    <property type="entry name" value="Formyl_trans"/>
    <property type="match status" value="1"/>
</dbReference>
<dbReference type="InterPro" id="IPR005794">
    <property type="entry name" value="Fmt"/>
</dbReference>
<dbReference type="InterPro" id="IPR005793">
    <property type="entry name" value="Formyl_trans_C"/>
</dbReference>
<dbReference type="InterPro" id="IPR037022">
    <property type="entry name" value="Formyl_trans_C_sf"/>
</dbReference>
<dbReference type="InterPro" id="IPR002376">
    <property type="entry name" value="Formyl_transf_N"/>
</dbReference>
<dbReference type="InterPro" id="IPR036477">
    <property type="entry name" value="Formyl_transf_N_sf"/>
</dbReference>
<dbReference type="InterPro" id="IPR011034">
    <property type="entry name" value="Formyl_transferase-like_C_sf"/>
</dbReference>
<dbReference type="InterPro" id="IPR001555">
    <property type="entry name" value="GART_AS"/>
</dbReference>
<dbReference type="InterPro" id="IPR044135">
    <property type="entry name" value="Met-tRNA-FMT_C"/>
</dbReference>
<dbReference type="InterPro" id="IPR041711">
    <property type="entry name" value="Met-tRNA-FMT_N"/>
</dbReference>
<dbReference type="NCBIfam" id="TIGR00460">
    <property type="entry name" value="fmt"/>
    <property type="match status" value="1"/>
</dbReference>
<dbReference type="PANTHER" id="PTHR11138">
    <property type="entry name" value="METHIONYL-TRNA FORMYLTRANSFERASE"/>
    <property type="match status" value="1"/>
</dbReference>
<dbReference type="PANTHER" id="PTHR11138:SF5">
    <property type="entry name" value="METHIONYL-TRNA FORMYLTRANSFERASE, MITOCHONDRIAL"/>
    <property type="match status" value="1"/>
</dbReference>
<dbReference type="Pfam" id="PF02911">
    <property type="entry name" value="Formyl_trans_C"/>
    <property type="match status" value="1"/>
</dbReference>
<dbReference type="Pfam" id="PF00551">
    <property type="entry name" value="Formyl_trans_N"/>
    <property type="match status" value="1"/>
</dbReference>
<dbReference type="SUPFAM" id="SSF50486">
    <property type="entry name" value="FMT C-terminal domain-like"/>
    <property type="match status" value="1"/>
</dbReference>
<dbReference type="SUPFAM" id="SSF53328">
    <property type="entry name" value="Formyltransferase"/>
    <property type="match status" value="1"/>
</dbReference>
<dbReference type="PROSITE" id="PS00373">
    <property type="entry name" value="GART"/>
    <property type="match status" value="1"/>
</dbReference>
<sequence length="317" mass="34727">MTRIVFMGTPDFSVPVLRTLIEDGYEVVGVVTQPDRPKGRKKIMTPPPVKAEAERHGIPVLQPEKVRLEEEIEKVLSLKPDLIVTAAFGQILPKQLLDGPKYGCINVHASLLPELRGGAPIHYSILQGKKKTGVTIMYMVEKLDAGDMISKIEVEIDETDNVGTLHDKLSIAGAKLLSETVPNVISGNIKPIKQDESKATYAPNIKREQERIDWAKPGEEIYNQIRGLNPWPVAYTTLNGQNMKVWASEKVAAKTEAAPGTVIRTEQNGIVVASGNSTALLITELQPAGKKRMKGEDFVRGKNVQPGDVLGEANEEN</sequence>
<evidence type="ECO:0000255" key="1">
    <source>
        <dbReference type="HAMAP-Rule" id="MF_00182"/>
    </source>
</evidence>
<evidence type="ECO:0000256" key="2">
    <source>
        <dbReference type="SAM" id="MobiDB-lite"/>
    </source>
</evidence>
<gene>
    <name evidence="1" type="primary">fmt</name>
    <name type="ordered locus">RBAM_015560</name>
</gene>
<reference key="1">
    <citation type="journal article" date="2007" name="Nat. Biotechnol.">
        <title>Comparative analysis of the complete genome sequence of the plant growth-promoting bacterium Bacillus amyloliquefaciens FZB42.</title>
        <authorList>
            <person name="Chen X.H."/>
            <person name="Koumoutsi A."/>
            <person name="Scholz R."/>
            <person name="Eisenreich A."/>
            <person name="Schneider K."/>
            <person name="Heinemeyer I."/>
            <person name="Morgenstern B."/>
            <person name="Voss B."/>
            <person name="Hess W.R."/>
            <person name="Reva O."/>
            <person name="Junge H."/>
            <person name="Voigt B."/>
            <person name="Jungblut P.R."/>
            <person name="Vater J."/>
            <person name="Suessmuth R."/>
            <person name="Liesegang H."/>
            <person name="Strittmatter A."/>
            <person name="Gottschalk G."/>
            <person name="Borriss R."/>
        </authorList>
    </citation>
    <scope>NUCLEOTIDE SEQUENCE [LARGE SCALE GENOMIC DNA]</scope>
    <source>
        <strain>DSM 23117 / BGSC 10A6 / LMG 26770 / FZB42</strain>
    </source>
</reference>
<name>FMT_BACVZ</name>
<organism>
    <name type="scientific">Bacillus velezensis (strain DSM 23117 / BGSC 10A6 / LMG 26770 / FZB42)</name>
    <name type="common">Bacillus amyloliquefaciens subsp. plantarum</name>
    <dbReference type="NCBI Taxonomy" id="326423"/>
    <lineage>
        <taxon>Bacteria</taxon>
        <taxon>Bacillati</taxon>
        <taxon>Bacillota</taxon>
        <taxon>Bacilli</taxon>
        <taxon>Bacillales</taxon>
        <taxon>Bacillaceae</taxon>
        <taxon>Bacillus</taxon>
        <taxon>Bacillus amyloliquefaciens group</taxon>
    </lineage>
</organism>